<comment type="subcellular location">
    <subcellularLocation>
        <location evidence="1">Bud neck</location>
    </subcellularLocation>
</comment>
<comment type="similarity">
    <text evidence="3">Belongs to the AIM44 family.</text>
</comment>
<sequence>MEKQHLQSHILREPERKKTKSFHGPQSDFKFPSTESLLKNEMDEYHLDNHHLLNDSIPRVNVTTANMHSGSAIDSDTNSQILSDYTSFSNPNSSNGYYSFANISDNTTSRNGPNSYQSYGLFSNDELQETEYRHTLDPEKISSNDTNHNNGYIHSTAGNDTQENNTETKVLGRGISNSISTANHSIPTIENISYRIESATSSLKSSKSVIQTKRLERPSINRVPTITRIGSIASYSSSSLNVGTSSLSLNRKRSNVSSLKRSGAIRCKGGLLYYFTTMGAKFRKQFHKMRMAIKRKLFGYQRSNSIHRSASIKSELNKKAKKSTSIKNRPVTSHLKRTQGYITNLQRSMSYKSLEPVLVPRFTDIMPNATSPMRKISNSQKAANYKKTASLRRTPSSIRRAASVFTSHNNSANATTENLANIVHATEEGPKSPELLHQQNNTIKGKISRSQGHSSLNTIIREPSIVVRNKVIPLSMKHYAIKEEDEEKLSSDEIKEENEENIDEYVIKTEQLEKQISNKHNITNLEPAEEIDNDDSSFDDVDFVSMDNDNEHLLASEIIKKNESEQLQKMLKQYLTHVIAQRIKLRLQLAKFQETGKIERESNSSHYDDKHLSTLVSLISEQESRNRRSQIFEKSRTYLSSETSSEDSIFNHATSDLALPFQYKNTSNDNVYSSDRLSLSIHTDFGESQGKHSTSVLSFHAQDVKRSLTLPISMKV</sequence>
<reference key="1">
    <citation type="journal article" date="2007" name="Proc. Natl. Acad. Sci. U.S.A.">
        <title>Independent sorting-out of thousands of duplicated gene pairs in two yeast species descended from a whole-genome duplication.</title>
        <authorList>
            <person name="Scannell D.R."/>
            <person name="Frank A.C."/>
            <person name="Conant G.C."/>
            <person name="Byrne K.P."/>
            <person name="Woolfit M."/>
            <person name="Wolfe K.H."/>
        </authorList>
    </citation>
    <scope>NUCLEOTIDE SEQUENCE [LARGE SCALE GENOMIC DNA]</scope>
    <source>
        <strain>ATCC 22028 / DSM 70294 / BCRC 21397 / CBS 2163 / NBRC 10782 / NRRL Y-8283 / UCD 57-17</strain>
    </source>
</reference>
<proteinExistence type="inferred from homology"/>
<keyword id="KW-1185">Reference proteome</keyword>
<gene>
    <name type="primary">AIM44</name>
    <name type="ORF">Kpol_1072p13</name>
</gene>
<evidence type="ECO:0000250" key="1"/>
<evidence type="ECO:0000256" key="2">
    <source>
        <dbReference type="SAM" id="MobiDB-lite"/>
    </source>
</evidence>
<evidence type="ECO:0000305" key="3"/>
<accession>A7TKN1</accession>
<name>AIM44_VANPO</name>
<organism>
    <name type="scientific">Vanderwaltozyma polyspora (strain ATCC 22028 / DSM 70294 / BCRC 21397 / CBS 2163 / NBRC 10782 / NRRL Y-8283 / UCD 57-17)</name>
    <name type="common">Kluyveromyces polysporus</name>
    <dbReference type="NCBI Taxonomy" id="436907"/>
    <lineage>
        <taxon>Eukaryota</taxon>
        <taxon>Fungi</taxon>
        <taxon>Dikarya</taxon>
        <taxon>Ascomycota</taxon>
        <taxon>Saccharomycotina</taxon>
        <taxon>Saccharomycetes</taxon>
        <taxon>Saccharomycetales</taxon>
        <taxon>Saccharomycetaceae</taxon>
        <taxon>Vanderwaltozyma</taxon>
    </lineage>
</organism>
<dbReference type="EMBL" id="DS480409">
    <property type="protein sequence ID" value="EDO17143.1"/>
    <property type="molecule type" value="Genomic_DNA"/>
</dbReference>
<dbReference type="RefSeq" id="XP_001645001.1">
    <property type="nucleotide sequence ID" value="XM_001644951.1"/>
</dbReference>
<dbReference type="FunCoup" id="A7TKN1">
    <property type="interactions" value="43"/>
</dbReference>
<dbReference type="STRING" id="436907.A7TKN1"/>
<dbReference type="GeneID" id="5545342"/>
<dbReference type="KEGG" id="vpo:Kpol_1072p13"/>
<dbReference type="eggNOG" id="ENOG502R02U">
    <property type="taxonomic scope" value="Eukaryota"/>
</dbReference>
<dbReference type="HOGENOM" id="CLU_385965_0_0_1"/>
<dbReference type="InParanoid" id="A7TKN1"/>
<dbReference type="OMA" id="MDFKFPS"/>
<dbReference type="OrthoDB" id="4065285at2759"/>
<dbReference type="PhylomeDB" id="A7TKN1"/>
<dbReference type="Proteomes" id="UP000000267">
    <property type="component" value="Unassembled WGS sequence"/>
</dbReference>
<dbReference type="GO" id="GO:0032174">
    <property type="term" value="C:cellular bud neck septin collar"/>
    <property type="evidence" value="ECO:0007669"/>
    <property type="project" value="EnsemblFungi"/>
</dbReference>
<dbReference type="GO" id="GO:0032177">
    <property type="term" value="C:cellular bud neck split septin rings"/>
    <property type="evidence" value="ECO:0007669"/>
    <property type="project" value="EnsemblFungi"/>
</dbReference>
<dbReference type="GO" id="GO:0005637">
    <property type="term" value="C:nuclear inner membrane"/>
    <property type="evidence" value="ECO:0007669"/>
    <property type="project" value="EnsemblFungi"/>
</dbReference>
<dbReference type="GO" id="GO:0005886">
    <property type="term" value="C:plasma membrane"/>
    <property type="evidence" value="ECO:0007669"/>
    <property type="project" value="EnsemblFungi"/>
</dbReference>
<dbReference type="GO" id="GO:0045185">
    <property type="term" value="P:maintenance of protein location"/>
    <property type="evidence" value="ECO:0007669"/>
    <property type="project" value="EnsemblFungi"/>
</dbReference>
<dbReference type="GO" id="GO:1903473">
    <property type="term" value="P:positive regulation of mitotic actomyosin contractile ring contraction"/>
    <property type="evidence" value="ECO:0007669"/>
    <property type="project" value="EnsemblFungi"/>
</dbReference>
<dbReference type="GO" id="GO:0098841">
    <property type="term" value="P:protein localization to cell division site after cytokinesis"/>
    <property type="evidence" value="ECO:0007669"/>
    <property type="project" value="EnsemblFungi"/>
</dbReference>
<dbReference type="GO" id="GO:1901900">
    <property type="term" value="P:regulation of protein localization to cell division site"/>
    <property type="evidence" value="ECO:0007669"/>
    <property type="project" value="EnsemblFungi"/>
</dbReference>
<dbReference type="GO" id="GO:1990344">
    <property type="term" value="P:secondary cell septum biogenesis"/>
    <property type="evidence" value="ECO:0007669"/>
    <property type="project" value="EnsemblFungi"/>
</dbReference>
<protein>
    <recommendedName>
        <fullName>Altered inheritance of mitochondria protein 44</fullName>
    </recommendedName>
</protein>
<feature type="chain" id="PRO_0000408698" description="Altered inheritance of mitochondria protein 44">
    <location>
        <begin position="1"/>
        <end position="716"/>
    </location>
</feature>
<feature type="region of interest" description="Disordered" evidence="2">
    <location>
        <begin position="1"/>
        <end position="30"/>
    </location>
</feature>
<feature type="region of interest" description="Disordered" evidence="2">
    <location>
        <begin position="370"/>
        <end position="394"/>
    </location>
</feature>
<feature type="compositionally biased region" description="Basic and acidic residues" evidence="2">
    <location>
        <begin position="1"/>
        <end position="16"/>
    </location>
</feature>
<feature type="compositionally biased region" description="Polar residues" evidence="2">
    <location>
        <begin position="370"/>
        <end position="382"/>
    </location>
</feature>